<evidence type="ECO:0000255" key="1">
    <source>
        <dbReference type="HAMAP-Rule" id="MF_01356"/>
    </source>
</evidence>
<evidence type="ECO:0000256" key="2">
    <source>
        <dbReference type="SAM" id="MobiDB-lite"/>
    </source>
</evidence>
<reference key="1">
    <citation type="journal article" date="2009" name="Genome Biol.">
        <title>Genomic and genetic analyses of diversity and plant interactions of Pseudomonas fluorescens.</title>
        <authorList>
            <person name="Silby M.W."/>
            <person name="Cerdeno-Tarraga A.M."/>
            <person name="Vernikos G.S."/>
            <person name="Giddens S.R."/>
            <person name="Jackson R.W."/>
            <person name="Preston G.M."/>
            <person name="Zhang X.-X."/>
            <person name="Moon C.D."/>
            <person name="Gehrig S.M."/>
            <person name="Godfrey S.A.C."/>
            <person name="Knight C.G."/>
            <person name="Malone J.G."/>
            <person name="Robinson Z."/>
            <person name="Spiers A.J."/>
            <person name="Harris S."/>
            <person name="Challis G.L."/>
            <person name="Yaxley A.M."/>
            <person name="Harris D."/>
            <person name="Seeger K."/>
            <person name="Murphy L."/>
            <person name="Rutter S."/>
            <person name="Squares R."/>
            <person name="Quail M.A."/>
            <person name="Saunders E."/>
            <person name="Mavromatis K."/>
            <person name="Brettin T.S."/>
            <person name="Bentley S.D."/>
            <person name="Hothersall J."/>
            <person name="Stephens E."/>
            <person name="Thomas C.M."/>
            <person name="Parkhill J."/>
            <person name="Levy S.B."/>
            <person name="Rainey P.B."/>
            <person name="Thomson N.R."/>
        </authorList>
    </citation>
    <scope>NUCLEOTIDE SEQUENCE [LARGE SCALE GENOMIC DNA]</scope>
    <source>
        <strain>SBW25</strain>
    </source>
</reference>
<proteinExistence type="inferred from homology"/>
<gene>
    <name evidence="1" type="primary">nuoB</name>
    <name type="ordered locus">PFLU_3819</name>
</gene>
<comment type="function">
    <text evidence="1">NDH-1 shuttles electrons from NADH, via FMN and iron-sulfur (Fe-S) centers, to quinones in the respiratory chain. The immediate electron acceptor for the enzyme in this species is believed to be ubiquinone. Couples the redox reaction to proton translocation (for every two electrons transferred, four hydrogen ions are translocated across the cytoplasmic membrane), and thus conserves the redox energy in a proton gradient.</text>
</comment>
<comment type="catalytic activity">
    <reaction evidence="1">
        <text>a quinone + NADH + 5 H(+)(in) = a quinol + NAD(+) + 4 H(+)(out)</text>
        <dbReference type="Rhea" id="RHEA:57888"/>
        <dbReference type="ChEBI" id="CHEBI:15378"/>
        <dbReference type="ChEBI" id="CHEBI:24646"/>
        <dbReference type="ChEBI" id="CHEBI:57540"/>
        <dbReference type="ChEBI" id="CHEBI:57945"/>
        <dbReference type="ChEBI" id="CHEBI:132124"/>
    </reaction>
</comment>
<comment type="cofactor">
    <cofactor evidence="1">
        <name>[4Fe-4S] cluster</name>
        <dbReference type="ChEBI" id="CHEBI:49883"/>
    </cofactor>
    <text evidence="1">Binds 1 [4Fe-4S] cluster.</text>
</comment>
<comment type="subunit">
    <text evidence="1">NDH-1 is composed of 13 different subunits. Subunits NuoB, CD, E, F, and G constitute the peripheral sector of the complex.</text>
</comment>
<comment type="subcellular location">
    <subcellularLocation>
        <location evidence="1">Cell inner membrane</location>
        <topology evidence="1">Peripheral membrane protein</topology>
        <orientation evidence="1">Cytoplasmic side</orientation>
    </subcellularLocation>
</comment>
<comment type="similarity">
    <text evidence="1">Belongs to the complex I 20 kDa subunit family.</text>
</comment>
<protein>
    <recommendedName>
        <fullName evidence="1">NADH-quinone oxidoreductase subunit B</fullName>
        <ecNumber evidence="1">7.1.1.-</ecNumber>
    </recommendedName>
    <alternativeName>
        <fullName evidence="1">NADH dehydrogenase I subunit B</fullName>
    </alternativeName>
    <alternativeName>
        <fullName evidence="1">NDH-1 subunit B</fullName>
    </alternativeName>
</protein>
<organism>
    <name type="scientific">Pseudomonas fluorescens (strain SBW25)</name>
    <dbReference type="NCBI Taxonomy" id="216595"/>
    <lineage>
        <taxon>Bacteria</taxon>
        <taxon>Pseudomonadati</taxon>
        <taxon>Pseudomonadota</taxon>
        <taxon>Gammaproteobacteria</taxon>
        <taxon>Pseudomonadales</taxon>
        <taxon>Pseudomonadaceae</taxon>
        <taxon>Pseudomonas</taxon>
    </lineage>
</organism>
<accession>C3JY82</accession>
<keyword id="KW-0004">4Fe-4S</keyword>
<keyword id="KW-0997">Cell inner membrane</keyword>
<keyword id="KW-1003">Cell membrane</keyword>
<keyword id="KW-0408">Iron</keyword>
<keyword id="KW-0411">Iron-sulfur</keyword>
<keyword id="KW-0472">Membrane</keyword>
<keyword id="KW-0479">Metal-binding</keyword>
<keyword id="KW-0520">NAD</keyword>
<keyword id="KW-0874">Quinone</keyword>
<keyword id="KW-1278">Translocase</keyword>
<keyword id="KW-0813">Transport</keyword>
<keyword id="KW-0830">Ubiquinone</keyword>
<feature type="chain" id="PRO_1000214863" description="NADH-quinone oxidoreductase subunit B">
    <location>
        <begin position="1"/>
        <end position="224"/>
    </location>
</feature>
<feature type="region of interest" description="Disordered" evidence="2">
    <location>
        <begin position="201"/>
        <end position="224"/>
    </location>
</feature>
<feature type="compositionally biased region" description="Basic and acidic residues" evidence="2">
    <location>
        <begin position="203"/>
        <end position="212"/>
    </location>
</feature>
<feature type="binding site" evidence="1">
    <location>
        <position position="67"/>
    </location>
    <ligand>
        <name>[4Fe-4S] cluster</name>
        <dbReference type="ChEBI" id="CHEBI:49883"/>
    </ligand>
</feature>
<feature type="binding site" evidence="1">
    <location>
        <position position="68"/>
    </location>
    <ligand>
        <name>[4Fe-4S] cluster</name>
        <dbReference type="ChEBI" id="CHEBI:49883"/>
    </ligand>
</feature>
<feature type="binding site" evidence="1">
    <location>
        <position position="133"/>
    </location>
    <ligand>
        <name>[4Fe-4S] cluster</name>
        <dbReference type="ChEBI" id="CHEBI:49883"/>
    </ligand>
</feature>
<feature type="binding site" evidence="1">
    <location>
        <position position="162"/>
    </location>
    <ligand>
        <name>[4Fe-4S] cluster</name>
        <dbReference type="ChEBI" id="CHEBI:49883"/>
    </ligand>
</feature>
<sequence length="224" mass="25357">MQYNLTRIDPDAPNDQYPIGERETVSDPLEDQVHKNIYMGKLEDVLSGAVNWGRKNSLWPYNFGLSCCYVEMTTAFTAPHDIARFGAEVIRASPRQADFMVIAGTCFIKMAPIIQRLYEQMLEPKWVISMGSCANSGGMYDIYSVVQGVDKFLPVDVYVPGCPPRPEAFLQGLMLLQESIGKERRPLSWVVGDQGVYRAEMPSQKEQRREQRIAVTNLRSPDEV</sequence>
<name>NUOB_PSEFS</name>
<dbReference type="EC" id="7.1.1.-" evidence="1"/>
<dbReference type="EMBL" id="AM181176">
    <property type="protein sequence ID" value="CAY50138.1"/>
    <property type="molecule type" value="Genomic_DNA"/>
</dbReference>
<dbReference type="RefSeq" id="WP_012724951.1">
    <property type="nucleotide sequence ID" value="NC_012660.1"/>
</dbReference>
<dbReference type="SMR" id="C3JY82"/>
<dbReference type="STRING" id="294.SRM1_03446"/>
<dbReference type="eggNOG" id="COG0377">
    <property type="taxonomic scope" value="Bacteria"/>
</dbReference>
<dbReference type="HOGENOM" id="CLU_055737_7_3_6"/>
<dbReference type="OrthoDB" id="9786737at2"/>
<dbReference type="GO" id="GO:0005886">
    <property type="term" value="C:plasma membrane"/>
    <property type="evidence" value="ECO:0007669"/>
    <property type="project" value="UniProtKB-SubCell"/>
</dbReference>
<dbReference type="GO" id="GO:0045271">
    <property type="term" value="C:respiratory chain complex I"/>
    <property type="evidence" value="ECO:0007669"/>
    <property type="project" value="TreeGrafter"/>
</dbReference>
<dbReference type="GO" id="GO:0051539">
    <property type="term" value="F:4 iron, 4 sulfur cluster binding"/>
    <property type="evidence" value="ECO:0007669"/>
    <property type="project" value="UniProtKB-KW"/>
</dbReference>
<dbReference type="GO" id="GO:0005506">
    <property type="term" value="F:iron ion binding"/>
    <property type="evidence" value="ECO:0007669"/>
    <property type="project" value="UniProtKB-UniRule"/>
</dbReference>
<dbReference type="GO" id="GO:0008137">
    <property type="term" value="F:NADH dehydrogenase (ubiquinone) activity"/>
    <property type="evidence" value="ECO:0007669"/>
    <property type="project" value="InterPro"/>
</dbReference>
<dbReference type="GO" id="GO:0050136">
    <property type="term" value="F:NADH:ubiquinone reductase (non-electrogenic) activity"/>
    <property type="evidence" value="ECO:0007669"/>
    <property type="project" value="UniProtKB-UniRule"/>
</dbReference>
<dbReference type="GO" id="GO:0048038">
    <property type="term" value="F:quinone binding"/>
    <property type="evidence" value="ECO:0007669"/>
    <property type="project" value="UniProtKB-KW"/>
</dbReference>
<dbReference type="GO" id="GO:0009060">
    <property type="term" value="P:aerobic respiration"/>
    <property type="evidence" value="ECO:0007669"/>
    <property type="project" value="TreeGrafter"/>
</dbReference>
<dbReference type="GO" id="GO:0015990">
    <property type="term" value="P:electron transport coupled proton transport"/>
    <property type="evidence" value="ECO:0007669"/>
    <property type="project" value="TreeGrafter"/>
</dbReference>
<dbReference type="FunFam" id="3.40.50.12280:FF:000002">
    <property type="entry name" value="NADH-quinone oxidoreductase subunit B"/>
    <property type="match status" value="1"/>
</dbReference>
<dbReference type="Gene3D" id="3.40.50.12280">
    <property type="match status" value="1"/>
</dbReference>
<dbReference type="HAMAP" id="MF_01356">
    <property type="entry name" value="NDH1_NuoB"/>
    <property type="match status" value="1"/>
</dbReference>
<dbReference type="InterPro" id="IPR006137">
    <property type="entry name" value="NADH_UbQ_OxRdtase-like_20kDa"/>
</dbReference>
<dbReference type="InterPro" id="IPR006138">
    <property type="entry name" value="NADH_UQ_OxRdtase_20Kd_su"/>
</dbReference>
<dbReference type="NCBIfam" id="TIGR01957">
    <property type="entry name" value="nuoB_fam"/>
    <property type="match status" value="1"/>
</dbReference>
<dbReference type="NCBIfam" id="NF005012">
    <property type="entry name" value="PRK06411.1"/>
    <property type="match status" value="1"/>
</dbReference>
<dbReference type="PANTHER" id="PTHR11995">
    <property type="entry name" value="NADH DEHYDROGENASE"/>
    <property type="match status" value="1"/>
</dbReference>
<dbReference type="PANTHER" id="PTHR11995:SF14">
    <property type="entry name" value="NADH DEHYDROGENASE [UBIQUINONE] IRON-SULFUR PROTEIN 7, MITOCHONDRIAL"/>
    <property type="match status" value="1"/>
</dbReference>
<dbReference type="Pfam" id="PF01058">
    <property type="entry name" value="Oxidored_q6"/>
    <property type="match status" value="1"/>
</dbReference>
<dbReference type="SUPFAM" id="SSF56770">
    <property type="entry name" value="HydA/Nqo6-like"/>
    <property type="match status" value="1"/>
</dbReference>
<dbReference type="PROSITE" id="PS01150">
    <property type="entry name" value="COMPLEX1_20K"/>
    <property type="match status" value="1"/>
</dbReference>